<organism>
    <name type="scientific">Deinococcus deserti (strain DSM 17065 / CIP 109153 / LMG 22923 / VCD115)</name>
    <dbReference type="NCBI Taxonomy" id="546414"/>
    <lineage>
        <taxon>Bacteria</taxon>
        <taxon>Thermotogati</taxon>
        <taxon>Deinococcota</taxon>
        <taxon>Deinococci</taxon>
        <taxon>Deinococcales</taxon>
        <taxon>Deinococcaceae</taxon>
        <taxon>Deinococcus</taxon>
    </lineage>
</organism>
<comment type="function">
    <text evidence="1">Part of the Sec protein translocase complex. Interacts with the SecYEG preprotein conducting channel. Has a central role in coupling the hydrolysis of ATP to the transfer of proteins into and across the cell membrane, serving as an ATP-driven molecular motor driving the stepwise translocation of polypeptide chains across the membrane.</text>
</comment>
<comment type="catalytic activity">
    <reaction evidence="1">
        <text>ATP + H2O + cellular proteinSide 1 = ADP + phosphate + cellular proteinSide 2.</text>
        <dbReference type="EC" id="7.4.2.8"/>
    </reaction>
</comment>
<comment type="subunit">
    <text evidence="1">Monomer and homodimer. Part of the essential Sec protein translocation apparatus which comprises SecA, SecYEG and auxiliary proteins SecDF. Other proteins may also be involved.</text>
</comment>
<comment type="subcellular location">
    <subcellularLocation>
        <location evidence="1">Cell membrane</location>
        <topology evidence="1">Peripheral membrane protein</topology>
        <orientation evidence="1">Cytoplasmic side</orientation>
    </subcellularLocation>
    <subcellularLocation>
        <location evidence="1">Cytoplasm</location>
    </subcellularLocation>
    <text evidence="1">Distribution is 50-50.</text>
</comment>
<comment type="similarity">
    <text evidence="1">Belongs to the SecA family.</text>
</comment>
<keyword id="KW-0067">ATP-binding</keyword>
<keyword id="KW-1003">Cell membrane</keyword>
<keyword id="KW-0963">Cytoplasm</keyword>
<keyword id="KW-0472">Membrane</keyword>
<keyword id="KW-0547">Nucleotide-binding</keyword>
<keyword id="KW-0653">Protein transport</keyword>
<keyword id="KW-1185">Reference proteome</keyword>
<keyword id="KW-1278">Translocase</keyword>
<keyword id="KW-0811">Translocation</keyword>
<keyword id="KW-0813">Transport</keyword>
<name>SECA_DEIDV</name>
<sequence length="869" mass="97107">MFRVLNKVFDNNQRDVQRIIKTVVDPVNALEQETMQIEDLAAAFLDLRRRVQEGGESLDDVLVPAFALIREAGRRSIGKRHYDVQLIGGAALHQGRIAEMRTGEGKTLVATLALSLNALEGRGCHLVTVNDYLARVGMEEMGLLYRTLGLTVGLASREMQPHEKQAAYACDITYVTNSELGFDYLRDNMAQSREALAMRAEHPLNYAIVDEVDSILIDEARTPLIISGAAEKATDLYYVYAKLIRRLQKGEPAEPGVRAEPTGDYTIDEKGKQVHITEAGISKIERLLSIPDLYSPENMDKAHMITQAIRAKELYHREKDYIINADGEVIIIDEFTGRSMPGRRYGEGLHQAIEAKENVKIENENQTLATITYQNFFRLYNKFAGMTGTAKTEEKEFLDIYGSDVLVIPTNRTILRKDSEDLVYRTKMGKYAAVVQEVAEMHATGRPVLIGTASIVTSEQLSDLLTQAGIRHSVLNAKFEAQEASIVAQAGRSGTVTIATNMAGRGTDIMLGGNAEFILGESIEQHLGISRFAPEAENFIKAISRQDPAAEMLGMQIPGMTPEFIQQAQQLQADTVADRARVQELGGLHIIGTERHESRRIDNQLRGRAGRQGDPGSSRFYVSFEDDLMRLFANDRVVAMMDRLGMDDSQPIEAKMVTGAIEKAQARVEDRNFSTRKQLLEFDNVMSKQRDTIYAQRREVLLGPDEDVEESTEGMIADFVDMQLAIHAPADQSPDAWDIEGLQAAIVDAVPQLEGFDFESLRHGSPAQAQDRLLSAVADAFDSRREELGSTMLNSLARYVLLQVVDQHWKEHLHGMDVLRQGIGLRGYGQRDPFTEYKFEATNMFNEMIDNLKSDVTKFIFRMQFGQTG</sequence>
<reference key="1">
    <citation type="journal article" date="2009" name="PLoS Genet.">
        <title>Alliance of proteomics and genomics to unravel the specificities of Sahara bacterium Deinococcus deserti.</title>
        <authorList>
            <person name="de Groot A."/>
            <person name="Dulermo R."/>
            <person name="Ortet P."/>
            <person name="Blanchard L."/>
            <person name="Guerin P."/>
            <person name="Fernandez B."/>
            <person name="Vacherie B."/>
            <person name="Dossat C."/>
            <person name="Jolivet E."/>
            <person name="Siguier P."/>
            <person name="Chandler M."/>
            <person name="Barakat M."/>
            <person name="Dedieu A."/>
            <person name="Barbe V."/>
            <person name="Heulin T."/>
            <person name="Sommer S."/>
            <person name="Achouak W."/>
            <person name="Armengaud J."/>
        </authorList>
    </citation>
    <scope>NUCLEOTIDE SEQUENCE [LARGE SCALE GENOMIC DNA]</scope>
    <source>
        <strain>DSM 17065 / CIP 109153 / LMG 22923 / VCD115</strain>
    </source>
</reference>
<feature type="chain" id="PRO_1000215105" description="Protein translocase subunit SecA">
    <location>
        <begin position="1"/>
        <end position="869"/>
    </location>
</feature>
<feature type="binding site" evidence="1">
    <location>
        <position position="85"/>
    </location>
    <ligand>
        <name>ATP</name>
        <dbReference type="ChEBI" id="CHEBI:30616"/>
    </ligand>
</feature>
<feature type="binding site" evidence="1">
    <location>
        <begin position="103"/>
        <end position="107"/>
    </location>
    <ligand>
        <name>ATP</name>
        <dbReference type="ChEBI" id="CHEBI:30616"/>
    </ligand>
</feature>
<feature type="binding site" evidence="1">
    <location>
        <position position="508"/>
    </location>
    <ligand>
        <name>ATP</name>
        <dbReference type="ChEBI" id="CHEBI:30616"/>
    </ligand>
</feature>
<evidence type="ECO:0000255" key="1">
    <source>
        <dbReference type="HAMAP-Rule" id="MF_01382"/>
    </source>
</evidence>
<proteinExistence type="inferred from homology"/>
<protein>
    <recommendedName>
        <fullName evidence="1">Protein translocase subunit SecA</fullName>
        <ecNumber evidence="1">7.4.2.8</ecNumber>
    </recommendedName>
</protein>
<gene>
    <name evidence="1" type="primary">secA</name>
    <name type="ordered locus">Deide_17210</name>
</gene>
<accession>C1CWX4</accession>
<dbReference type="EC" id="7.4.2.8" evidence="1"/>
<dbReference type="EMBL" id="CP001114">
    <property type="protein sequence ID" value="ACO46691.1"/>
    <property type="molecule type" value="Genomic_DNA"/>
</dbReference>
<dbReference type="RefSeq" id="WP_012693813.1">
    <property type="nucleotide sequence ID" value="NC_012526.1"/>
</dbReference>
<dbReference type="SMR" id="C1CWX4"/>
<dbReference type="STRING" id="546414.Deide_17210"/>
<dbReference type="PaxDb" id="546414-Deide_17210"/>
<dbReference type="KEGG" id="ddr:Deide_17210"/>
<dbReference type="eggNOG" id="COG0653">
    <property type="taxonomic scope" value="Bacteria"/>
</dbReference>
<dbReference type="HOGENOM" id="CLU_005314_3_2_0"/>
<dbReference type="OrthoDB" id="9805579at2"/>
<dbReference type="Proteomes" id="UP000002208">
    <property type="component" value="Chromosome"/>
</dbReference>
<dbReference type="GO" id="GO:0031522">
    <property type="term" value="C:cell envelope Sec protein transport complex"/>
    <property type="evidence" value="ECO:0007669"/>
    <property type="project" value="TreeGrafter"/>
</dbReference>
<dbReference type="GO" id="GO:0005829">
    <property type="term" value="C:cytosol"/>
    <property type="evidence" value="ECO:0007669"/>
    <property type="project" value="TreeGrafter"/>
</dbReference>
<dbReference type="GO" id="GO:0005886">
    <property type="term" value="C:plasma membrane"/>
    <property type="evidence" value="ECO:0007669"/>
    <property type="project" value="UniProtKB-SubCell"/>
</dbReference>
<dbReference type="GO" id="GO:0005524">
    <property type="term" value="F:ATP binding"/>
    <property type="evidence" value="ECO:0007669"/>
    <property type="project" value="UniProtKB-UniRule"/>
</dbReference>
<dbReference type="GO" id="GO:0008564">
    <property type="term" value="F:protein-exporting ATPase activity"/>
    <property type="evidence" value="ECO:0007669"/>
    <property type="project" value="UniProtKB-EC"/>
</dbReference>
<dbReference type="GO" id="GO:0065002">
    <property type="term" value="P:intracellular protein transmembrane transport"/>
    <property type="evidence" value="ECO:0007669"/>
    <property type="project" value="UniProtKB-UniRule"/>
</dbReference>
<dbReference type="GO" id="GO:0017038">
    <property type="term" value="P:protein import"/>
    <property type="evidence" value="ECO:0007669"/>
    <property type="project" value="InterPro"/>
</dbReference>
<dbReference type="GO" id="GO:0006605">
    <property type="term" value="P:protein targeting"/>
    <property type="evidence" value="ECO:0007669"/>
    <property type="project" value="UniProtKB-UniRule"/>
</dbReference>
<dbReference type="GO" id="GO:0043952">
    <property type="term" value="P:protein transport by the Sec complex"/>
    <property type="evidence" value="ECO:0007669"/>
    <property type="project" value="TreeGrafter"/>
</dbReference>
<dbReference type="CDD" id="cd17928">
    <property type="entry name" value="DEXDc_SecA"/>
    <property type="match status" value="1"/>
</dbReference>
<dbReference type="CDD" id="cd18803">
    <property type="entry name" value="SF2_C_secA"/>
    <property type="match status" value="1"/>
</dbReference>
<dbReference type="FunFam" id="1.10.3060.10:FF:000003">
    <property type="entry name" value="Protein translocase subunit SecA"/>
    <property type="match status" value="1"/>
</dbReference>
<dbReference type="FunFam" id="3.90.1440.10:FF:000002">
    <property type="entry name" value="Protein translocase subunit SecA"/>
    <property type="match status" value="1"/>
</dbReference>
<dbReference type="Gene3D" id="1.10.3060.10">
    <property type="entry name" value="Helical scaffold and wing domains of SecA"/>
    <property type="match status" value="1"/>
</dbReference>
<dbReference type="Gene3D" id="3.40.50.300">
    <property type="entry name" value="P-loop containing nucleotide triphosphate hydrolases"/>
    <property type="match status" value="2"/>
</dbReference>
<dbReference type="Gene3D" id="3.90.1440.10">
    <property type="entry name" value="SecA, preprotein cross-linking domain"/>
    <property type="match status" value="1"/>
</dbReference>
<dbReference type="HAMAP" id="MF_01382">
    <property type="entry name" value="SecA"/>
    <property type="match status" value="1"/>
</dbReference>
<dbReference type="InterPro" id="IPR014001">
    <property type="entry name" value="Helicase_ATP-bd"/>
</dbReference>
<dbReference type="InterPro" id="IPR027417">
    <property type="entry name" value="P-loop_NTPase"/>
</dbReference>
<dbReference type="InterPro" id="IPR000185">
    <property type="entry name" value="SecA"/>
</dbReference>
<dbReference type="InterPro" id="IPR020937">
    <property type="entry name" value="SecA_CS"/>
</dbReference>
<dbReference type="InterPro" id="IPR011115">
    <property type="entry name" value="SecA_DEAD"/>
</dbReference>
<dbReference type="InterPro" id="IPR014018">
    <property type="entry name" value="SecA_motor_DEAD"/>
</dbReference>
<dbReference type="InterPro" id="IPR011130">
    <property type="entry name" value="SecA_preprotein_X-link_dom"/>
</dbReference>
<dbReference type="InterPro" id="IPR044722">
    <property type="entry name" value="SecA_SF2_C"/>
</dbReference>
<dbReference type="InterPro" id="IPR011116">
    <property type="entry name" value="SecA_Wing/Scaffold"/>
</dbReference>
<dbReference type="InterPro" id="IPR036266">
    <property type="entry name" value="SecA_Wing/Scaffold_sf"/>
</dbReference>
<dbReference type="InterPro" id="IPR036670">
    <property type="entry name" value="SecA_X-link_sf"/>
</dbReference>
<dbReference type="NCBIfam" id="NF009538">
    <property type="entry name" value="PRK12904.1"/>
    <property type="match status" value="1"/>
</dbReference>
<dbReference type="NCBIfam" id="TIGR00963">
    <property type="entry name" value="secA"/>
    <property type="match status" value="1"/>
</dbReference>
<dbReference type="PANTHER" id="PTHR30612:SF0">
    <property type="entry name" value="CHLOROPLAST PROTEIN-TRANSPORTING ATPASE"/>
    <property type="match status" value="1"/>
</dbReference>
<dbReference type="PANTHER" id="PTHR30612">
    <property type="entry name" value="SECA INNER MEMBRANE COMPONENT OF SEC PROTEIN SECRETION SYSTEM"/>
    <property type="match status" value="1"/>
</dbReference>
<dbReference type="Pfam" id="PF21090">
    <property type="entry name" value="P-loop_SecA"/>
    <property type="match status" value="1"/>
</dbReference>
<dbReference type="Pfam" id="PF07517">
    <property type="entry name" value="SecA_DEAD"/>
    <property type="match status" value="1"/>
</dbReference>
<dbReference type="Pfam" id="PF01043">
    <property type="entry name" value="SecA_PP_bind"/>
    <property type="match status" value="1"/>
</dbReference>
<dbReference type="Pfam" id="PF07516">
    <property type="entry name" value="SecA_SW"/>
    <property type="match status" value="1"/>
</dbReference>
<dbReference type="PRINTS" id="PR00906">
    <property type="entry name" value="SECA"/>
</dbReference>
<dbReference type="SMART" id="SM00957">
    <property type="entry name" value="SecA_DEAD"/>
    <property type="match status" value="1"/>
</dbReference>
<dbReference type="SMART" id="SM00958">
    <property type="entry name" value="SecA_PP_bind"/>
    <property type="match status" value="1"/>
</dbReference>
<dbReference type="SUPFAM" id="SSF81886">
    <property type="entry name" value="Helical scaffold and wing domains of SecA"/>
    <property type="match status" value="1"/>
</dbReference>
<dbReference type="SUPFAM" id="SSF52540">
    <property type="entry name" value="P-loop containing nucleoside triphosphate hydrolases"/>
    <property type="match status" value="2"/>
</dbReference>
<dbReference type="SUPFAM" id="SSF81767">
    <property type="entry name" value="Pre-protein crosslinking domain of SecA"/>
    <property type="match status" value="1"/>
</dbReference>
<dbReference type="PROSITE" id="PS01312">
    <property type="entry name" value="SECA"/>
    <property type="match status" value="1"/>
</dbReference>
<dbReference type="PROSITE" id="PS51196">
    <property type="entry name" value="SECA_MOTOR_DEAD"/>
    <property type="match status" value="1"/>
</dbReference>